<dbReference type="EMBL" id="BA000031">
    <property type="protein sequence ID" value="BAC60363.1"/>
    <property type="molecule type" value="Genomic_DNA"/>
</dbReference>
<dbReference type="RefSeq" id="NP_798479.1">
    <property type="nucleotide sequence ID" value="NC_004603.1"/>
</dbReference>
<dbReference type="RefSeq" id="WP_005482400.1">
    <property type="nucleotide sequence ID" value="NC_004603.1"/>
</dbReference>
<dbReference type="SMR" id="Q87MX6"/>
<dbReference type="GeneID" id="1189611"/>
<dbReference type="KEGG" id="vpa:VP2100"/>
<dbReference type="PATRIC" id="fig|223926.6.peg.2011"/>
<dbReference type="eggNOG" id="COG0556">
    <property type="taxonomic scope" value="Bacteria"/>
</dbReference>
<dbReference type="HOGENOM" id="CLU_009621_2_1_6"/>
<dbReference type="Proteomes" id="UP000002493">
    <property type="component" value="Chromosome 1"/>
</dbReference>
<dbReference type="GO" id="GO:0005737">
    <property type="term" value="C:cytoplasm"/>
    <property type="evidence" value="ECO:0007669"/>
    <property type="project" value="UniProtKB-SubCell"/>
</dbReference>
<dbReference type="GO" id="GO:0009380">
    <property type="term" value="C:excinuclease repair complex"/>
    <property type="evidence" value="ECO:0007669"/>
    <property type="project" value="InterPro"/>
</dbReference>
<dbReference type="GO" id="GO:0005524">
    <property type="term" value="F:ATP binding"/>
    <property type="evidence" value="ECO:0007669"/>
    <property type="project" value="UniProtKB-UniRule"/>
</dbReference>
<dbReference type="GO" id="GO:0016887">
    <property type="term" value="F:ATP hydrolysis activity"/>
    <property type="evidence" value="ECO:0007669"/>
    <property type="project" value="InterPro"/>
</dbReference>
<dbReference type="GO" id="GO:0003677">
    <property type="term" value="F:DNA binding"/>
    <property type="evidence" value="ECO:0007669"/>
    <property type="project" value="UniProtKB-UniRule"/>
</dbReference>
<dbReference type="GO" id="GO:0009381">
    <property type="term" value="F:excinuclease ABC activity"/>
    <property type="evidence" value="ECO:0007669"/>
    <property type="project" value="UniProtKB-UniRule"/>
</dbReference>
<dbReference type="GO" id="GO:0006289">
    <property type="term" value="P:nucleotide-excision repair"/>
    <property type="evidence" value="ECO:0007669"/>
    <property type="project" value="UniProtKB-UniRule"/>
</dbReference>
<dbReference type="GO" id="GO:0009432">
    <property type="term" value="P:SOS response"/>
    <property type="evidence" value="ECO:0007669"/>
    <property type="project" value="UniProtKB-UniRule"/>
</dbReference>
<dbReference type="CDD" id="cd17916">
    <property type="entry name" value="DEXHc_UvrB"/>
    <property type="match status" value="1"/>
</dbReference>
<dbReference type="CDD" id="cd18790">
    <property type="entry name" value="SF2_C_UvrB"/>
    <property type="match status" value="1"/>
</dbReference>
<dbReference type="FunFam" id="3.40.50.300:FF:000257">
    <property type="entry name" value="UvrABC system protein B"/>
    <property type="match status" value="1"/>
</dbReference>
<dbReference type="FunFam" id="3.40.50.300:FF:000477">
    <property type="entry name" value="UvrABC system protein B"/>
    <property type="match status" value="1"/>
</dbReference>
<dbReference type="Gene3D" id="3.40.50.300">
    <property type="entry name" value="P-loop containing nucleotide triphosphate hydrolases"/>
    <property type="match status" value="3"/>
</dbReference>
<dbReference type="Gene3D" id="4.10.860.10">
    <property type="entry name" value="UVR domain"/>
    <property type="match status" value="1"/>
</dbReference>
<dbReference type="HAMAP" id="MF_00204">
    <property type="entry name" value="UvrB"/>
    <property type="match status" value="1"/>
</dbReference>
<dbReference type="InterPro" id="IPR006935">
    <property type="entry name" value="Helicase/UvrB_N"/>
</dbReference>
<dbReference type="InterPro" id="IPR014001">
    <property type="entry name" value="Helicase_ATP-bd"/>
</dbReference>
<dbReference type="InterPro" id="IPR001650">
    <property type="entry name" value="Helicase_C-like"/>
</dbReference>
<dbReference type="InterPro" id="IPR027417">
    <property type="entry name" value="P-loop_NTPase"/>
</dbReference>
<dbReference type="InterPro" id="IPR001943">
    <property type="entry name" value="UVR_dom"/>
</dbReference>
<dbReference type="InterPro" id="IPR036876">
    <property type="entry name" value="UVR_dom_sf"/>
</dbReference>
<dbReference type="InterPro" id="IPR004807">
    <property type="entry name" value="UvrB"/>
</dbReference>
<dbReference type="InterPro" id="IPR041471">
    <property type="entry name" value="UvrB_inter"/>
</dbReference>
<dbReference type="InterPro" id="IPR024759">
    <property type="entry name" value="UvrB_YAD/RRR_dom"/>
</dbReference>
<dbReference type="NCBIfam" id="NF003673">
    <property type="entry name" value="PRK05298.1"/>
    <property type="match status" value="1"/>
</dbReference>
<dbReference type="NCBIfam" id="TIGR00631">
    <property type="entry name" value="uvrb"/>
    <property type="match status" value="1"/>
</dbReference>
<dbReference type="PANTHER" id="PTHR24029">
    <property type="entry name" value="UVRABC SYSTEM PROTEIN B"/>
    <property type="match status" value="1"/>
</dbReference>
<dbReference type="PANTHER" id="PTHR24029:SF0">
    <property type="entry name" value="UVRABC SYSTEM PROTEIN B"/>
    <property type="match status" value="1"/>
</dbReference>
<dbReference type="Pfam" id="PF00271">
    <property type="entry name" value="Helicase_C"/>
    <property type="match status" value="1"/>
</dbReference>
<dbReference type="Pfam" id="PF04851">
    <property type="entry name" value="ResIII"/>
    <property type="match status" value="1"/>
</dbReference>
<dbReference type="Pfam" id="PF02151">
    <property type="entry name" value="UVR"/>
    <property type="match status" value="1"/>
</dbReference>
<dbReference type="Pfam" id="PF12344">
    <property type="entry name" value="UvrB"/>
    <property type="match status" value="1"/>
</dbReference>
<dbReference type="Pfam" id="PF17757">
    <property type="entry name" value="UvrB_inter"/>
    <property type="match status" value="1"/>
</dbReference>
<dbReference type="SMART" id="SM00487">
    <property type="entry name" value="DEXDc"/>
    <property type="match status" value="1"/>
</dbReference>
<dbReference type="SMART" id="SM00490">
    <property type="entry name" value="HELICc"/>
    <property type="match status" value="1"/>
</dbReference>
<dbReference type="SUPFAM" id="SSF46600">
    <property type="entry name" value="C-terminal UvrC-binding domain of UvrB"/>
    <property type="match status" value="1"/>
</dbReference>
<dbReference type="SUPFAM" id="SSF52540">
    <property type="entry name" value="P-loop containing nucleoside triphosphate hydrolases"/>
    <property type="match status" value="2"/>
</dbReference>
<dbReference type="PROSITE" id="PS51192">
    <property type="entry name" value="HELICASE_ATP_BIND_1"/>
    <property type="match status" value="1"/>
</dbReference>
<dbReference type="PROSITE" id="PS51194">
    <property type="entry name" value="HELICASE_CTER"/>
    <property type="match status" value="1"/>
</dbReference>
<dbReference type="PROSITE" id="PS50151">
    <property type="entry name" value="UVR"/>
    <property type="match status" value="1"/>
</dbReference>
<protein>
    <recommendedName>
        <fullName evidence="1">UvrABC system protein B</fullName>
        <shortName evidence="1">Protein UvrB</shortName>
    </recommendedName>
    <alternativeName>
        <fullName evidence="1">Excinuclease ABC subunit B</fullName>
    </alternativeName>
</protein>
<sequence>MSKVYELVSEYQPSGDQPTAIKQLLEGLDAGLAHQTLLGVTGSGKTFTLANVIAQAQRPAILLAPNKTLAAQLYGEMKSFFPNNAVEYFVSYYDYYQPEAYVPTTDTFIEKDASVNAHIEQMRLSATKALLERKDAIIVASVSAIYGLGDPESYLQMMLHLRRGDVIDQRDMLRRLAELQYSRNDVAFERGQFRVRGEVIDIFPAESDQDAVRVEMFDDEVDCISVFDPLTGVVKQRDLPRYTIYPKTHYVTPRDRILEAIESIKVELEVRKKQLLENNKLIEEQRISQRTQFDIEMMNELGFCSGIENYSRYLSGRSEGEPPPTLFDYLPHDGLLIIDESHVTVPQIGAMYKGDRSRKETLVEFGFRLPSALDNRPLKFEEFESLAPQTIFVSATPGNYELEKSAGEIADQVVRPTGLLDPILEVRPVATQVDDLLSEIRIRAAKEERVLVTTLTKRMAEDLTEYLHEHDVRVRYLHSDIDTVERVEIIRDLRLGEFDVLVGINLLREGLDMPEVSLVAILDADKEGFLRSERSLIQTIGRAARNIEGKAILYADNITKSMKKAMDETNRRREKQQAYNEKMGITPQALKRNIKDIMELGDITKSKRQRNTKQVPLSKVAEPSQTYEVMSPQQLEKEISRLEAAMYQHAQDLEFELAAEKRDEIEKLRAQFIANS</sequence>
<proteinExistence type="inferred from homology"/>
<name>UVRB_VIBPA</name>
<keyword id="KW-0067">ATP-binding</keyword>
<keyword id="KW-0963">Cytoplasm</keyword>
<keyword id="KW-0227">DNA damage</keyword>
<keyword id="KW-0228">DNA excision</keyword>
<keyword id="KW-0234">DNA repair</keyword>
<keyword id="KW-0267">Excision nuclease</keyword>
<keyword id="KW-0547">Nucleotide-binding</keyword>
<keyword id="KW-0742">SOS response</keyword>
<reference key="1">
    <citation type="journal article" date="2003" name="Lancet">
        <title>Genome sequence of Vibrio parahaemolyticus: a pathogenic mechanism distinct from that of V. cholerae.</title>
        <authorList>
            <person name="Makino K."/>
            <person name="Oshima K."/>
            <person name="Kurokawa K."/>
            <person name="Yokoyama K."/>
            <person name="Uda T."/>
            <person name="Tagomori K."/>
            <person name="Iijima Y."/>
            <person name="Najima M."/>
            <person name="Nakano M."/>
            <person name="Yamashita A."/>
            <person name="Kubota Y."/>
            <person name="Kimura S."/>
            <person name="Yasunaga T."/>
            <person name="Honda T."/>
            <person name="Shinagawa H."/>
            <person name="Hattori M."/>
            <person name="Iida T."/>
        </authorList>
    </citation>
    <scope>NUCLEOTIDE SEQUENCE [LARGE SCALE GENOMIC DNA]</scope>
    <source>
        <strain>RIMD 2210633</strain>
    </source>
</reference>
<organism>
    <name type="scientific">Vibrio parahaemolyticus serotype O3:K6 (strain RIMD 2210633)</name>
    <dbReference type="NCBI Taxonomy" id="223926"/>
    <lineage>
        <taxon>Bacteria</taxon>
        <taxon>Pseudomonadati</taxon>
        <taxon>Pseudomonadota</taxon>
        <taxon>Gammaproteobacteria</taxon>
        <taxon>Vibrionales</taxon>
        <taxon>Vibrionaceae</taxon>
        <taxon>Vibrio</taxon>
    </lineage>
</organism>
<accession>Q87MX6</accession>
<comment type="function">
    <text evidence="1">The UvrABC repair system catalyzes the recognition and processing of DNA lesions. A damage recognition complex composed of 2 UvrA and 2 UvrB subunits scans DNA for abnormalities. Upon binding of the UvrA(2)B(2) complex to a putative damaged site, the DNA wraps around one UvrB monomer. DNA wrap is dependent on ATP binding by UvrB and probably causes local melting of the DNA helix, facilitating insertion of UvrB beta-hairpin between the DNA strands. Then UvrB probes one DNA strand for the presence of a lesion. If a lesion is found the UvrA subunits dissociate and the UvrB-DNA preincision complex is formed. This complex is subsequently bound by UvrC and the second UvrB is released. If no lesion is found, the DNA wraps around the other UvrB subunit that will check the other stand for damage.</text>
</comment>
<comment type="subunit">
    <text evidence="1">Forms a heterotetramer with UvrA during the search for lesions. Interacts with UvrC in an incision complex.</text>
</comment>
<comment type="subcellular location">
    <subcellularLocation>
        <location evidence="1">Cytoplasm</location>
    </subcellularLocation>
</comment>
<comment type="domain">
    <text evidence="1">The beta-hairpin motif is involved in DNA binding.</text>
</comment>
<comment type="similarity">
    <text evidence="1">Belongs to the UvrB family.</text>
</comment>
<gene>
    <name evidence="1" type="primary">uvrB</name>
    <name type="ordered locus">VP2100</name>
</gene>
<feature type="chain" id="PRO_0000138444" description="UvrABC system protein B">
    <location>
        <begin position="1"/>
        <end position="676"/>
    </location>
</feature>
<feature type="domain" description="Helicase ATP-binding" evidence="1">
    <location>
        <begin position="26"/>
        <end position="414"/>
    </location>
</feature>
<feature type="domain" description="Helicase C-terminal" evidence="1">
    <location>
        <begin position="432"/>
        <end position="598"/>
    </location>
</feature>
<feature type="domain" description="UVR" evidence="1">
    <location>
        <begin position="636"/>
        <end position="671"/>
    </location>
</feature>
<feature type="short sequence motif" description="Beta-hairpin">
    <location>
        <begin position="92"/>
        <end position="115"/>
    </location>
</feature>
<feature type="binding site" evidence="1">
    <location>
        <begin position="39"/>
        <end position="46"/>
    </location>
    <ligand>
        <name>ATP</name>
        <dbReference type="ChEBI" id="CHEBI:30616"/>
    </ligand>
</feature>
<evidence type="ECO:0000255" key="1">
    <source>
        <dbReference type="HAMAP-Rule" id="MF_00204"/>
    </source>
</evidence>